<protein>
    <recommendedName>
        <fullName evidence="1">Acetylglutamate kinase</fullName>
        <ecNumber evidence="1">2.7.2.8</ecNumber>
    </recommendedName>
    <alternativeName>
        <fullName evidence="1">N-acetyl-L-glutamate 5-phosphotransferase</fullName>
    </alternativeName>
    <alternativeName>
        <fullName evidence="1">NAG kinase</fullName>
        <shortName evidence="1">NAGK</shortName>
    </alternativeName>
</protein>
<dbReference type="EC" id="2.7.2.8" evidence="1"/>
<dbReference type="EMBL" id="CP000474">
    <property type="protein sequence ID" value="ABM07296.1"/>
    <property type="molecule type" value="Genomic_DNA"/>
</dbReference>
<dbReference type="SMR" id="A1R587"/>
<dbReference type="STRING" id="290340.AAur_1633"/>
<dbReference type="KEGG" id="aau:AAur_1633"/>
<dbReference type="eggNOG" id="COG0548">
    <property type="taxonomic scope" value="Bacteria"/>
</dbReference>
<dbReference type="HOGENOM" id="CLU_053680_0_0_11"/>
<dbReference type="UniPathway" id="UPA00068">
    <property type="reaction ID" value="UER00107"/>
</dbReference>
<dbReference type="Proteomes" id="UP000000637">
    <property type="component" value="Chromosome"/>
</dbReference>
<dbReference type="GO" id="GO:0005737">
    <property type="term" value="C:cytoplasm"/>
    <property type="evidence" value="ECO:0007669"/>
    <property type="project" value="UniProtKB-SubCell"/>
</dbReference>
<dbReference type="GO" id="GO:0003991">
    <property type="term" value="F:acetylglutamate kinase activity"/>
    <property type="evidence" value="ECO:0007669"/>
    <property type="project" value="UniProtKB-UniRule"/>
</dbReference>
<dbReference type="GO" id="GO:0005524">
    <property type="term" value="F:ATP binding"/>
    <property type="evidence" value="ECO:0007669"/>
    <property type="project" value="UniProtKB-UniRule"/>
</dbReference>
<dbReference type="GO" id="GO:0042450">
    <property type="term" value="P:arginine biosynthetic process via ornithine"/>
    <property type="evidence" value="ECO:0007669"/>
    <property type="project" value="UniProtKB-UniRule"/>
</dbReference>
<dbReference type="GO" id="GO:0006526">
    <property type="term" value="P:L-arginine biosynthetic process"/>
    <property type="evidence" value="ECO:0007669"/>
    <property type="project" value="UniProtKB-UniPathway"/>
</dbReference>
<dbReference type="CDD" id="cd04250">
    <property type="entry name" value="AAK_NAGK-C"/>
    <property type="match status" value="1"/>
</dbReference>
<dbReference type="FunFam" id="3.40.1160.10:FF:000004">
    <property type="entry name" value="Acetylglutamate kinase"/>
    <property type="match status" value="1"/>
</dbReference>
<dbReference type="Gene3D" id="3.40.1160.10">
    <property type="entry name" value="Acetylglutamate kinase-like"/>
    <property type="match status" value="1"/>
</dbReference>
<dbReference type="HAMAP" id="MF_00082">
    <property type="entry name" value="ArgB"/>
    <property type="match status" value="1"/>
</dbReference>
<dbReference type="InterPro" id="IPR036393">
    <property type="entry name" value="AceGlu_kinase-like_sf"/>
</dbReference>
<dbReference type="InterPro" id="IPR004662">
    <property type="entry name" value="AcgluKinase_fam"/>
</dbReference>
<dbReference type="InterPro" id="IPR037528">
    <property type="entry name" value="ArgB"/>
</dbReference>
<dbReference type="InterPro" id="IPR001048">
    <property type="entry name" value="Asp/Glu/Uridylate_kinase"/>
</dbReference>
<dbReference type="InterPro" id="IPR001057">
    <property type="entry name" value="Glu/AcGlu_kinase"/>
</dbReference>
<dbReference type="InterPro" id="IPR041727">
    <property type="entry name" value="NAGK-C"/>
</dbReference>
<dbReference type="NCBIfam" id="TIGR00761">
    <property type="entry name" value="argB"/>
    <property type="match status" value="1"/>
</dbReference>
<dbReference type="PANTHER" id="PTHR23342">
    <property type="entry name" value="N-ACETYLGLUTAMATE SYNTHASE"/>
    <property type="match status" value="1"/>
</dbReference>
<dbReference type="PANTHER" id="PTHR23342:SF0">
    <property type="entry name" value="N-ACETYLGLUTAMATE SYNTHASE, MITOCHONDRIAL"/>
    <property type="match status" value="1"/>
</dbReference>
<dbReference type="Pfam" id="PF00696">
    <property type="entry name" value="AA_kinase"/>
    <property type="match status" value="1"/>
</dbReference>
<dbReference type="PIRSF" id="PIRSF000728">
    <property type="entry name" value="NAGK"/>
    <property type="match status" value="1"/>
</dbReference>
<dbReference type="PRINTS" id="PR00474">
    <property type="entry name" value="GLU5KINASE"/>
</dbReference>
<dbReference type="SUPFAM" id="SSF53633">
    <property type="entry name" value="Carbamate kinase-like"/>
    <property type="match status" value="1"/>
</dbReference>
<keyword id="KW-0028">Amino-acid biosynthesis</keyword>
<keyword id="KW-0055">Arginine biosynthesis</keyword>
<keyword id="KW-0067">ATP-binding</keyword>
<keyword id="KW-0963">Cytoplasm</keyword>
<keyword id="KW-0418">Kinase</keyword>
<keyword id="KW-0547">Nucleotide-binding</keyword>
<keyword id="KW-0808">Transferase</keyword>
<gene>
    <name evidence="1" type="primary">argB</name>
    <name type="ordered locus">AAur_1633</name>
</gene>
<proteinExistence type="inferred from homology"/>
<comment type="function">
    <text evidence="1">Catalyzes the ATP-dependent phosphorylation of N-acetyl-L-glutamate.</text>
</comment>
<comment type="catalytic activity">
    <reaction evidence="1">
        <text>N-acetyl-L-glutamate + ATP = N-acetyl-L-glutamyl 5-phosphate + ADP</text>
        <dbReference type="Rhea" id="RHEA:14629"/>
        <dbReference type="ChEBI" id="CHEBI:30616"/>
        <dbReference type="ChEBI" id="CHEBI:44337"/>
        <dbReference type="ChEBI" id="CHEBI:57936"/>
        <dbReference type="ChEBI" id="CHEBI:456216"/>
        <dbReference type="EC" id="2.7.2.8"/>
    </reaction>
</comment>
<comment type="pathway">
    <text evidence="1">Amino-acid biosynthesis; L-arginine biosynthesis; N(2)-acetyl-L-ornithine from L-glutamate: step 2/4.</text>
</comment>
<comment type="subcellular location">
    <subcellularLocation>
        <location evidence="1">Cytoplasm</location>
    </subcellularLocation>
</comment>
<comment type="similarity">
    <text evidence="1">Belongs to the acetylglutamate kinase family. ArgB subfamily.</text>
</comment>
<organism>
    <name type="scientific">Paenarthrobacter aurescens (strain TC1)</name>
    <dbReference type="NCBI Taxonomy" id="290340"/>
    <lineage>
        <taxon>Bacteria</taxon>
        <taxon>Bacillati</taxon>
        <taxon>Actinomycetota</taxon>
        <taxon>Actinomycetes</taxon>
        <taxon>Micrococcales</taxon>
        <taxon>Micrococcaceae</taxon>
        <taxon>Paenarthrobacter</taxon>
    </lineage>
</organism>
<reference key="1">
    <citation type="journal article" date="2006" name="PLoS Genet.">
        <title>Secrets of soil survival revealed by the genome sequence of Arthrobacter aurescens TC1.</title>
        <authorList>
            <person name="Mongodin E.F."/>
            <person name="Shapir N."/>
            <person name="Daugherty S.C."/>
            <person name="DeBoy R.T."/>
            <person name="Emerson J.B."/>
            <person name="Shvartzbeyn A."/>
            <person name="Radune D."/>
            <person name="Vamathevan J."/>
            <person name="Riggs F."/>
            <person name="Grinberg V."/>
            <person name="Khouri H.M."/>
            <person name="Wackett L.P."/>
            <person name="Nelson K.E."/>
            <person name="Sadowsky M.J."/>
        </authorList>
    </citation>
    <scope>NUCLEOTIDE SEQUENCE [LARGE SCALE GENOMIC DNA]</scope>
    <source>
        <strain>TC1</strain>
    </source>
</reference>
<feature type="chain" id="PRO_0000335606" description="Acetylglutamate kinase">
    <location>
        <begin position="1"/>
        <end position="316"/>
    </location>
</feature>
<feature type="binding site" evidence="1">
    <location>
        <begin position="76"/>
        <end position="77"/>
    </location>
    <ligand>
        <name>substrate</name>
    </ligand>
</feature>
<feature type="binding site" evidence="1">
    <location>
        <position position="98"/>
    </location>
    <ligand>
        <name>substrate</name>
    </ligand>
</feature>
<feature type="binding site" evidence="1">
    <location>
        <position position="207"/>
    </location>
    <ligand>
        <name>substrate</name>
    </ligand>
</feature>
<feature type="site" description="Transition state stabilizer" evidence="1">
    <location>
        <position position="41"/>
    </location>
</feature>
<feature type="site" description="Transition state stabilizer" evidence="1">
    <location>
        <position position="268"/>
    </location>
</feature>
<evidence type="ECO:0000255" key="1">
    <source>
        <dbReference type="HAMAP-Rule" id="MF_00082"/>
    </source>
</evidence>
<name>ARGB_PAEAT</name>
<sequence length="316" mass="33110">MTMTAHTRETTSMSDAQDKAGTLIEALPWIQRFAGTTMVIKYGGNAMVNDDLRRAFAEDIVFLHHVGIHPVVVHGGGPQINSMLSRLGIESEFKGGLRVTTPEAMDVVRMVLTGQVGRELVGLINSHGPYAVGMSGEDGGLLRAVRTGTVVDGEEVDLGLVGEVVGVDPAGIKDILDAGRIPVISTVAPEILDDGNGSGPTTGQVLNVNADTAAAAVASALGATKLVILTDVEGLYANWPDKSSLISSLTASELRDMLPRLESGMIPKMAACLKAIDEGVERAHIVDGRLPHSMLLETFTTAGIGTQVVPDEEVNA</sequence>
<accession>A1R587</accession>